<gene>
    <name type="ordered locus">ACP_1973</name>
</gene>
<comment type="function">
    <text evidence="1">Could be a mediator in iron transactions between iron acquisition and iron-requiring processes, such as synthesis and/or repair of Fe-S clusters in biosynthetic enzymes.</text>
</comment>
<comment type="similarity">
    <text evidence="1">Belongs to the Fe(2+)-trafficking protein family.</text>
</comment>
<name>FETP_ACIC5</name>
<evidence type="ECO:0000255" key="1">
    <source>
        <dbReference type="HAMAP-Rule" id="MF_00686"/>
    </source>
</evidence>
<accession>C1F8R9</accession>
<protein>
    <recommendedName>
        <fullName evidence="1">Probable Fe(2+)-trafficking protein</fullName>
    </recommendedName>
</protein>
<proteinExistence type="inferred from homology"/>
<reference key="1">
    <citation type="journal article" date="2009" name="Appl. Environ. Microbiol.">
        <title>Three genomes from the phylum Acidobacteria provide insight into the lifestyles of these microorganisms in soils.</title>
        <authorList>
            <person name="Ward N.L."/>
            <person name="Challacombe J.F."/>
            <person name="Janssen P.H."/>
            <person name="Henrissat B."/>
            <person name="Coutinho P.M."/>
            <person name="Wu M."/>
            <person name="Xie G."/>
            <person name="Haft D.H."/>
            <person name="Sait M."/>
            <person name="Badger J."/>
            <person name="Barabote R.D."/>
            <person name="Bradley B."/>
            <person name="Brettin T.S."/>
            <person name="Brinkac L.M."/>
            <person name="Bruce D."/>
            <person name="Creasy T."/>
            <person name="Daugherty S.C."/>
            <person name="Davidsen T.M."/>
            <person name="DeBoy R.T."/>
            <person name="Detter J.C."/>
            <person name="Dodson R.J."/>
            <person name="Durkin A.S."/>
            <person name="Ganapathy A."/>
            <person name="Gwinn-Giglio M."/>
            <person name="Han C.S."/>
            <person name="Khouri H."/>
            <person name="Kiss H."/>
            <person name="Kothari S.P."/>
            <person name="Madupu R."/>
            <person name="Nelson K.E."/>
            <person name="Nelson W.C."/>
            <person name="Paulsen I."/>
            <person name="Penn K."/>
            <person name="Ren Q."/>
            <person name="Rosovitz M.J."/>
            <person name="Selengut J.D."/>
            <person name="Shrivastava S."/>
            <person name="Sullivan S.A."/>
            <person name="Tapia R."/>
            <person name="Thompson L.S."/>
            <person name="Watkins K.L."/>
            <person name="Yang Q."/>
            <person name="Yu C."/>
            <person name="Zafar N."/>
            <person name="Zhou L."/>
            <person name="Kuske C.R."/>
        </authorList>
    </citation>
    <scope>NUCLEOTIDE SEQUENCE [LARGE SCALE GENOMIC DNA]</scope>
    <source>
        <strain>ATCC 51196 / DSM 11244 / BCRC 80197 / JCM 7670 / NBRC 15755 / NCIMB 13165 / 161</strain>
    </source>
</reference>
<keyword id="KW-0408">Iron</keyword>
<keyword id="KW-1185">Reference proteome</keyword>
<feature type="chain" id="PRO_1000147762" description="Probable Fe(2+)-trafficking protein">
    <location>
        <begin position="1"/>
        <end position="91"/>
    </location>
</feature>
<sequence length="91" mass="10894">MAHNVFCARYKQEMEGLDEPPFDSDFGHKIYNNVSKRAWGEWIEHQKMLLNEYRLQPWTPQAQEFLVEQMNQYFFGEGAQLPKEYVPPSPR</sequence>
<organism>
    <name type="scientific">Acidobacterium capsulatum (strain ATCC 51196 / DSM 11244 / BCRC 80197 / JCM 7670 / NBRC 15755 / NCIMB 13165 / 161)</name>
    <dbReference type="NCBI Taxonomy" id="240015"/>
    <lineage>
        <taxon>Bacteria</taxon>
        <taxon>Pseudomonadati</taxon>
        <taxon>Acidobacteriota</taxon>
        <taxon>Terriglobia</taxon>
        <taxon>Terriglobales</taxon>
        <taxon>Acidobacteriaceae</taxon>
        <taxon>Acidobacterium</taxon>
    </lineage>
</organism>
<dbReference type="EMBL" id="CP001472">
    <property type="protein sequence ID" value="ACO33790.1"/>
    <property type="molecule type" value="Genomic_DNA"/>
</dbReference>
<dbReference type="RefSeq" id="WP_015897083.1">
    <property type="nucleotide sequence ID" value="NC_012483.1"/>
</dbReference>
<dbReference type="SMR" id="C1F8R9"/>
<dbReference type="FunCoup" id="C1F8R9">
    <property type="interactions" value="32"/>
</dbReference>
<dbReference type="STRING" id="240015.ACP_1973"/>
<dbReference type="KEGG" id="aca:ACP_1973"/>
<dbReference type="eggNOG" id="COG2924">
    <property type="taxonomic scope" value="Bacteria"/>
</dbReference>
<dbReference type="HOGENOM" id="CLU_170994_0_0_0"/>
<dbReference type="InParanoid" id="C1F8R9"/>
<dbReference type="OrthoDB" id="9804318at2"/>
<dbReference type="Proteomes" id="UP000002207">
    <property type="component" value="Chromosome"/>
</dbReference>
<dbReference type="GO" id="GO:0005829">
    <property type="term" value="C:cytosol"/>
    <property type="evidence" value="ECO:0007669"/>
    <property type="project" value="TreeGrafter"/>
</dbReference>
<dbReference type="GO" id="GO:0005506">
    <property type="term" value="F:iron ion binding"/>
    <property type="evidence" value="ECO:0007669"/>
    <property type="project" value="UniProtKB-UniRule"/>
</dbReference>
<dbReference type="GO" id="GO:0034599">
    <property type="term" value="P:cellular response to oxidative stress"/>
    <property type="evidence" value="ECO:0007669"/>
    <property type="project" value="TreeGrafter"/>
</dbReference>
<dbReference type="Gene3D" id="1.10.3880.10">
    <property type="entry name" value="Fe(II) trafficking protein YggX"/>
    <property type="match status" value="1"/>
</dbReference>
<dbReference type="HAMAP" id="MF_00686">
    <property type="entry name" value="Fe_traffic_YggX"/>
    <property type="match status" value="1"/>
</dbReference>
<dbReference type="InterPro" id="IPR007457">
    <property type="entry name" value="Fe_traffick_prot_YggX"/>
</dbReference>
<dbReference type="InterPro" id="IPR036766">
    <property type="entry name" value="Fe_traffick_prot_YggX_sf"/>
</dbReference>
<dbReference type="NCBIfam" id="NF003817">
    <property type="entry name" value="PRK05408.1"/>
    <property type="match status" value="1"/>
</dbReference>
<dbReference type="PANTHER" id="PTHR36965">
    <property type="entry name" value="FE(2+)-TRAFFICKING PROTEIN-RELATED"/>
    <property type="match status" value="1"/>
</dbReference>
<dbReference type="PANTHER" id="PTHR36965:SF1">
    <property type="entry name" value="FE(2+)-TRAFFICKING PROTEIN-RELATED"/>
    <property type="match status" value="1"/>
</dbReference>
<dbReference type="Pfam" id="PF04362">
    <property type="entry name" value="Iron_traffic"/>
    <property type="match status" value="1"/>
</dbReference>
<dbReference type="PIRSF" id="PIRSF029827">
    <property type="entry name" value="Fe_traffic_YggX"/>
    <property type="match status" value="1"/>
</dbReference>
<dbReference type="SUPFAM" id="SSF111148">
    <property type="entry name" value="YggX-like"/>
    <property type="match status" value="1"/>
</dbReference>